<name>PETL_PLAOC</name>
<accession>Q09G28</accession>
<keyword id="KW-0150">Chloroplast</keyword>
<keyword id="KW-0249">Electron transport</keyword>
<keyword id="KW-0472">Membrane</keyword>
<keyword id="KW-0602">Photosynthesis</keyword>
<keyword id="KW-0934">Plastid</keyword>
<keyword id="KW-0793">Thylakoid</keyword>
<keyword id="KW-0812">Transmembrane</keyword>
<keyword id="KW-1133">Transmembrane helix</keyword>
<keyword id="KW-0813">Transport</keyword>
<comment type="function">
    <text evidence="1">Component of the cytochrome b6-f complex, which mediates electron transfer between photosystem II (PSII) and photosystem I (PSI), cyclic electron flow around PSI, and state transitions. PetL is important for photoautotrophic growth as well as for electron transfer efficiency and stability of the cytochrome b6-f complex.</text>
</comment>
<comment type="subunit">
    <text evidence="1">The 4 large subunits of the cytochrome b6-f complex are cytochrome b6, subunit IV (17 kDa polypeptide, PetD), cytochrome f and the Rieske protein, while the 4 small subunits are PetG, PetL, PetM and PetN. The complex functions as a dimer.</text>
</comment>
<comment type="subcellular location">
    <subcellularLocation>
        <location evidence="1">Plastid</location>
        <location evidence="1">Chloroplast thylakoid membrane</location>
        <topology evidence="1">Single-pass membrane protein</topology>
    </subcellularLocation>
</comment>
<comment type="similarity">
    <text evidence="1">Belongs to the PetL family.</text>
</comment>
<reference key="1">
    <citation type="journal article" date="2006" name="BMC Plant Biol.">
        <title>Rapid and accurate pyrosequencing of angiosperm plastid genomes.</title>
        <authorList>
            <person name="Moore M.J."/>
            <person name="Dhingra A."/>
            <person name="Soltis P.S."/>
            <person name="Shaw R."/>
            <person name="Farmerie W.G."/>
            <person name="Folta K.M."/>
            <person name="Soltis D.E."/>
        </authorList>
    </citation>
    <scope>NUCLEOTIDE SEQUENCE [LARGE SCALE GENOMIC DNA]</scope>
</reference>
<organism>
    <name type="scientific">Platanus occidentalis</name>
    <name type="common">Sycamore</name>
    <name type="synonym">American plane tree</name>
    <dbReference type="NCBI Taxonomy" id="4403"/>
    <lineage>
        <taxon>Eukaryota</taxon>
        <taxon>Viridiplantae</taxon>
        <taxon>Streptophyta</taxon>
        <taxon>Embryophyta</taxon>
        <taxon>Tracheophyta</taxon>
        <taxon>Spermatophyta</taxon>
        <taxon>Magnoliopsida</taxon>
        <taxon>Proteales</taxon>
        <taxon>Platanaceae</taxon>
        <taxon>Platanus</taxon>
    </lineage>
</organism>
<gene>
    <name evidence="1" type="primary">petL</name>
</gene>
<evidence type="ECO:0000255" key="1">
    <source>
        <dbReference type="HAMAP-Rule" id="MF_00433"/>
    </source>
</evidence>
<sequence>MPTITSYFGFLLAALTITSALFIGLSKIRLI</sequence>
<protein>
    <recommendedName>
        <fullName evidence="1">Cytochrome b6-f complex subunit 6</fullName>
    </recommendedName>
    <alternativeName>
        <fullName evidence="1">Cytochrome b6-f complex subunit PetL</fullName>
    </alternativeName>
    <alternativeName>
        <fullName evidence="1">Cytochrome b6-f complex subunit VI</fullName>
    </alternativeName>
</protein>
<geneLocation type="chloroplast"/>
<feature type="chain" id="PRO_0000278086" description="Cytochrome b6-f complex subunit 6">
    <location>
        <begin position="1"/>
        <end position="31"/>
    </location>
</feature>
<feature type="transmembrane region" description="Helical" evidence="1">
    <location>
        <begin position="4"/>
        <end position="24"/>
    </location>
</feature>
<dbReference type="EMBL" id="DQ923116">
    <property type="protein sequence ID" value="ABI49796.1"/>
    <property type="molecule type" value="Genomic_DNA"/>
</dbReference>
<dbReference type="RefSeq" id="YP_740583.1">
    <property type="nucleotide sequence ID" value="NC_008335.1"/>
</dbReference>
<dbReference type="SMR" id="Q09G28"/>
<dbReference type="GeneID" id="4271308"/>
<dbReference type="GO" id="GO:0009535">
    <property type="term" value="C:chloroplast thylakoid membrane"/>
    <property type="evidence" value="ECO:0007669"/>
    <property type="project" value="UniProtKB-SubCell"/>
</dbReference>
<dbReference type="GO" id="GO:0009512">
    <property type="term" value="C:cytochrome b6f complex"/>
    <property type="evidence" value="ECO:0007669"/>
    <property type="project" value="InterPro"/>
</dbReference>
<dbReference type="GO" id="GO:0045158">
    <property type="term" value="F:electron transporter, transferring electrons within cytochrome b6/f complex of photosystem II activity"/>
    <property type="evidence" value="ECO:0007669"/>
    <property type="project" value="UniProtKB-UniRule"/>
</dbReference>
<dbReference type="GO" id="GO:0015979">
    <property type="term" value="P:photosynthesis"/>
    <property type="evidence" value="ECO:0007669"/>
    <property type="project" value="UniProtKB-KW"/>
</dbReference>
<dbReference type="HAMAP" id="MF_00433">
    <property type="entry name" value="Cytb6_f_PetL"/>
    <property type="match status" value="1"/>
</dbReference>
<dbReference type="InterPro" id="IPR007802">
    <property type="entry name" value="Cyt_b6/f_cplx_su6"/>
</dbReference>
<dbReference type="PANTHER" id="PTHR37266">
    <property type="entry name" value="CYTOCHROME B6-F COMPLEX SUBUNIT 6"/>
    <property type="match status" value="1"/>
</dbReference>
<dbReference type="PANTHER" id="PTHR37266:SF1">
    <property type="entry name" value="CYTOCHROME B6-F COMPLEX SUBUNIT 6"/>
    <property type="match status" value="1"/>
</dbReference>
<dbReference type="Pfam" id="PF05115">
    <property type="entry name" value="PetL"/>
    <property type="match status" value="1"/>
</dbReference>
<dbReference type="SUPFAM" id="SSF103436">
    <property type="entry name" value="PetL subunit of the cytochrome b6f complex"/>
    <property type="match status" value="1"/>
</dbReference>
<proteinExistence type="inferred from homology"/>